<proteinExistence type="inferred from homology"/>
<organism>
    <name type="scientific">Saccharomyces cerevisiae (strain YJM789)</name>
    <name type="common">Baker's yeast</name>
    <dbReference type="NCBI Taxonomy" id="307796"/>
    <lineage>
        <taxon>Eukaryota</taxon>
        <taxon>Fungi</taxon>
        <taxon>Dikarya</taxon>
        <taxon>Ascomycota</taxon>
        <taxon>Saccharomycotina</taxon>
        <taxon>Saccharomycetes</taxon>
        <taxon>Saccharomycetales</taxon>
        <taxon>Saccharomycetaceae</taxon>
        <taxon>Saccharomyces</taxon>
    </lineage>
</organism>
<evidence type="ECO:0000250" key="1"/>
<evidence type="ECO:0000250" key="2">
    <source>
        <dbReference type="UniProtKB" id="P20449"/>
    </source>
</evidence>
<evidence type="ECO:0000255" key="3">
    <source>
        <dbReference type="PROSITE-ProRule" id="PRU00541"/>
    </source>
</evidence>
<evidence type="ECO:0000255" key="4">
    <source>
        <dbReference type="PROSITE-ProRule" id="PRU00542"/>
    </source>
</evidence>
<evidence type="ECO:0000256" key="5">
    <source>
        <dbReference type="SAM" id="MobiDB-lite"/>
    </source>
</evidence>
<evidence type="ECO:0000305" key="6"/>
<gene>
    <name type="primary">DBP5</name>
    <name type="synonym">RAT8</name>
    <name type="ORF">SCY_5119</name>
</gene>
<feature type="chain" id="PRO_0000310206" description="ATP-dependent RNA helicase DBP5">
    <location>
        <begin position="1"/>
        <end position="482"/>
    </location>
</feature>
<feature type="domain" description="Helicase ATP-binding" evidence="3">
    <location>
        <begin position="125"/>
        <end position="292"/>
    </location>
</feature>
<feature type="domain" description="Helicase C-terminal" evidence="4">
    <location>
        <begin position="303"/>
        <end position="480"/>
    </location>
</feature>
<feature type="region of interest" description="Disordered" evidence="5">
    <location>
        <begin position="1"/>
        <end position="62"/>
    </location>
</feature>
<feature type="short sequence motif" description="Q motif">
    <location>
        <begin position="92"/>
        <end position="120"/>
    </location>
</feature>
<feature type="short sequence motif" description="DEAD box">
    <location>
        <begin position="239"/>
        <end position="242"/>
    </location>
</feature>
<feature type="compositionally biased region" description="Basic and acidic residues" evidence="5">
    <location>
        <begin position="17"/>
        <end position="62"/>
    </location>
</feature>
<feature type="binding site" evidence="3">
    <location>
        <begin position="138"/>
        <end position="145"/>
    </location>
    <ligand>
        <name>ATP</name>
        <dbReference type="ChEBI" id="CHEBI:30616"/>
    </ligand>
</feature>
<feature type="modified residue" description="Phosphoserine" evidence="2">
    <location>
        <position position="86"/>
    </location>
</feature>
<feature type="modified residue" description="Phosphoserine" evidence="2">
    <location>
        <position position="93"/>
    </location>
</feature>
<feature type="modified residue" description="Phosphoserine" evidence="2">
    <location>
        <position position="162"/>
    </location>
</feature>
<name>DBP5_YEAS7</name>
<dbReference type="EC" id="3.6.4.13"/>
<dbReference type="EMBL" id="AAFW02000030">
    <property type="protein sequence ID" value="EDN63916.1"/>
    <property type="molecule type" value="Genomic_DNA"/>
</dbReference>
<dbReference type="SMR" id="A6ZNQ1"/>
<dbReference type="HOGENOM" id="CLU_003041_1_0_1"/>
<dbReference type="Proteomes" id="UP000007060">
    <property type="component" value="Unassembled WGS sequence"/>
</dbReference>
<dbReference type="GO" id="GO:0005737">
    <property type="term" value="C:cytoplasm"/>
    <property type="evidence" value="ECO:0007669"/>
    <property type="project" value="UniProtKB-SubCell"/>
</dbReference>
<dbReference type="GO" id="GO:0031965">
    <property type="term" value="C:nuclear membrane"/>
    <property type="evidence" value="ECO:0007669"/>
    <property type="project" value="UniProtKB-SubCell"/>
</dbReference>
<dbReference type="GO" id="GO:0005643">
    <property type="term" value="C:nuclear pore"/>
    <property type="evidence" value="ECO:0007669"/>
    <property type="project" value="UniProtKB-SubCell"/>
</dbReference>
<dbReference type="GO" id="GO:0005524">
    <property type="term" value="F:ATP binding"/>
    <property type="evidence" value="ECO:0007669"/>
    <property type="project" value="UniProtKB-KW"/>
</dbReference>
<dbReference type="GO" id="GO:0016887">
    <property type="term" value="F:ATP hydrolysis activity"/>
    <property type="evidence" value="ECO:0007669"/>
    <property type="project" value="RHEA"/>
</dbReference>
<dbReference type="GO" id="GO:0003723">
    <property type="term" value="F:RNA binding"/>
    <property type="evidence" value="ECO:0007669"/>
    <property type="project" value="UniProtKB-KW"/>
</dbReference>
<dbReference type="GO" id="GO:0003724">
    <property type="term" value="F:RNA helicase activity"/>
    <property type="evidence" value="ECO:0007669"/>
    <property type="project" value="UniProtKB-EC"/>
</dbReference>
<dbReference type="GO" id="GO:0010467">
    <property type="term" value="P:gene expression"/>
    <property type="evidence" value="ECO:0007669"/>
    <property type="project" value="UniProtKB-ARBA"/>
</dbReference>
<dbReference type="GO" id="GO:0051028">
    <property type="term" value="P:mRNA transport"/>
    <property type="evidence" value="ECO:0007669"/>
    <property type="project" value="UniProtKB-KW"/>
</dbReference>
<dbReference type="GO" id="GO:0015031">
    <property type="term" value="P:protein transport"/>
    <property type="evidence" value="ECO:0007669"/>
    <property type="project" value="UniProtKB-KW"/>
</dbReference>
<dbReference type="CDD" id="cd17963">
    <property type="entry name" value="DEADc_DDX19_DDX25"/>
    <property type="match status" value="1"/>
</dbReference>
<dbReference type="CDD" id="cd18787">
    <property type="entry name" value="SF2_C_DEAD"/>
    <property type="match status" value="1"/>
</dbReference>
<dbReference type="FunFam" id="3.40.50.300:FF:000849">
    <property type="entry name" value="ATP-dependent RNA helicase DBP5"/>
    <property type="match status" value="1"/>
</dbReference>
<dbReference type="FunFam" id="3.40.50.300:FF:000318">
    <property type="entry name" value="ATP-dependent RNA helicase DDX19B"/>
    <property type="match status" value="1"/>
</dbReference>
<dbReference type="Gene3D" id="3.40.50.300">
    <property type="entry name" value="P-loop containing nucleotide triphosphate hydrolases"/>
    <property type="match status" value="2"/>
</dbReference>
<dbReference type="InterPro" id="IPR011545">
    <property type="entry name" value="DEAD/DEAH_box_helicase_dom"/>
</dbReference>
<dbReference type="InterPro" id="IPR014001">
    <property type="entry name" value="Helicase_ATP-bd"/>
</dbReference>
<dbReference type="InterPro" id="IPR001650">
    <property type="entry name" value="Helicase_C-like"/>
</dbReference>
<dbReference type="InterPro" id="IPR027417">
    <property type="entry name" value="P-loop_NTPase"/>
</dbReference>
<dbReference type="InterPro" id="IPR000629">
    <property type="entry name" value="RNA-helicase_DEAD-box_CS"/>
</dbReference>
<dbReference type="InterPro" id="IPR014014">
    <property type="entry name" value="RNA_helicase_DEAD_Q_motif"/>
</dbReference>
<dbReference type="PANTHER" id="PTHR47958">
    <property type="entry name" value="ATP-DEPENDENT RNA HELICASE DBP3"/>
    <property type="match status" value="1"/>
</dbReference>
<dbReference type="Pfam" id="PF00270">
    <property type="entry name" value="DEAD"/>
    <property type="match status" value="1"/>
</dbReference>
<dbReference type="Pfam" id="PF00271">
    <property type="entry name" value="Helicase_C"/>
    <property type="match status" value="1"/>
</dbReference>
<dbReference type="SMART" id="SM00487">
    <property type="entry name" value="DEXDc"/>
    <property type="match status" value="1"/>
</dbReference>
<dbReference type="SMART" id="SM00490">
    <property type="entry name" value="HELICc"/>
    <property type="match status" value="1"/>
</dbReference>
<dbReference type="SUPFAM" id="SSF52540">
    <property type="entry name" value="P-loop containing nucleoside triphosphate hydrolases"/>
    <property type="match status" value="1"/>
</dbReference>
<dbReference type="PROSITE" id="PS00039">
    <property type="entry name" value="DEAD_ATP_HELICASE"/>
    <property type="match status" value="1"/>
</dbReference>
<dbReference type="PROSITE" id="PS51192">
    <property type="entry name" value="HELICASE_ATP_BIND_1"/>
    <property type="match status" value="1"/>
</dbReference>
<dbReference type="PROSITE" id="PS51194">
    <property type="entry name" value="HELICASE_CTER"/>
    <property type="match status" value="1"/>
</dbReference>
<dbReference type="PROSITE" id="PS51195">
    <property type="entry name" value="Q_MOTIF"/>
    <property type="match status" value="1"/>
</dbReference>
<accession>A6ZNQ1</accession>
<sequence length="482" mass="53874">MSDTKRDPADLLASLKIDNEKEDTSEVSTKETVKSQPEKTADSIKPAEKLVPKVEEKKTKQEDSNLISSEYEVKVKLADIQADPNSPLYSAKSFDELGLAPELLKGIYAMKFQKPSKIQERALPLLLHNPPRNMIAQSQSGTGKTAAFSLTMLTRVNPEDASPQAICLAPSRELARQTLEVVQEMGKFTKITSQLIVPDSFEKNKQINAQVIVGTPGTVLDLMRRKLMQLQKIKIFVLDEADNMLDQQGLGDQCIRVKRFLPKDTQLVLFSATFADAVRQYAKKIVPNANTLELQTNEVNVDAIKQLYMDCKNEADKFDVLTELYGLMTIGSSIIFVATKKTANVLYGKLKSEGHEVSILHGDLQTQERDRLIDDFREGRSKVLITTNVLARGIDIPTVSMVVNYDLPTLANGQADPATYIHRIGRTGRFGRKGVAISFVHDKNSFNILSAIQKYFGDIEMTRVPTDDWDEVEKIVKKVLKD</sequence>
<keyword id="KW-0067">ATP-binding</keyword>
<keyword id="KW-0963">Cytoplasm</keyword>
<keyword id="KW-0347">Helicase</keyword>
<keyword id="KW-0378">Hydrolase</keyword>
<keyword id="KW-0472">Membrane</keyword>
<keyword id="KW-0509">mRNA transport</keyword>
<keyword id="KW-0906">Nuclear pore complex</keyword>
<keyword id="KW-0547">Nucleotide-binding</keyword>
<keyword id="KW-0539">Nucleus</keyword>
<keyword id="KW-0597">Phosphoprotein</keyword>
<keyword id="KW-0653">Protein transport</keyword>
<keyword id="KW-0694">RNA-binding</keyword>
<keyword id="KW-0811">Translocation</keyword>
<keyword id="KW-0813">Transport</keyword>
<comment type="function">
    <text evidence="1">ATP-dependent RNA helicase associated with the nuclear pore complex and essential for mRNA export from the nucleus. May participate in a terminal step of mRNA export through the removal of proteins that accompany mRNA through the nucleopore complex. May also be involved in early transcription (By similarity).</text>
</comment>
<comment type="catalytic activity">
    <reaction>
        <text>ATP + H2O = ADP + phosphate + H(+)</text>
        <dbReference type="Rhea" id="RHEA:13065"/>
        <dbReference type="ChEBI" id="CHEBI:15377"/>
        <dbReference type="ChEBI" id="CHEBI:15378"/>
        <dbReference type="ChEBI" id="CHEBI:30616"/>
        <dbReference type="ChEBI" id="CHEBI:43474"/>
        <dbReference type="ChEBI" id="CHEBI:456216"/>
        <dbReference type="EC" id="3.6.4.13"/>
    </reaction>
</comment>
<comment type="subunit">
    <text evidence="1">Associates with the nuclear pore complex. Interacts with NUP159, GLE1, GFD1 and ZDS1. The interaction with NUP159 is necessary for the association to the nuclear pore complex. Also interacts with the TFIIH complex subunits TFB1, TFB2 and RAD3 (By similarity).</text>
</comment>
<comment type="subcellular location">
    <subcellularLocation>
        <location evidence="1">Cytoplasm</location>
    </subcellularLocation>
    <subcellularLocation>
        <location>Nucleus</location>
        <location>Nuclear pore complex</location>
    </subcellularLocation>
    <subcellularLocation>
        <location evidence="1">Nucleus membrane</location>
        <topology evidence="1">Peripheral membrane protein</topology>
        <orientation evidence="1">Cytoplasmic side</orientation>
    </subcellularLocation>
    <text evidence="1">Nuclear pore complex cytoplasmic fibrils.</text>
</comment>
<comment type="domain">
    <text>The Q motif is unique to and characteristic of the DEAD box family of RNA helicases and controls ATP binding and hydrolysis.</text>
</comment>
<comment type="similarity">
    <text evidence="6">Belongs to the DEAD box helicase family. DDX19/DBP5 subfamily.</text>
</comment>
<protein>
    <recommendedName>
        <fullName>ATP-dependent RNA helicase DBP5</fullName>
        <ecNumber>3.6.4.13</ecNumber>
    </recommendedName>
    <alternativeName>
        <fullName>DEAD box protein 5</fullName>
    </alternativeName>
    <alternativeName>
        <fullName>Helicase CA5/6</fullName>
    </alternativeName>
    <alternativeName>
        <fullName>Ribonucleic acid-trafficking protein 8</fullName>
    </alternativeName>
</protein>
<reference key="1">
    <citation type="journal article" date="2007" name="Proc. Natl. Acad. Sci. U.S.A.">
        <title>Genome sequencing and comparative analysis of Saccharomyces cerevisiae strain YJM789.</title>
        <authorList>
            <person name="Wei W."/>
            <person name="McCusker J.H."/>
            <person name="Hyman R.W."/>
            <person name="Jones T."/>
            <person name="Ning Y."/>
            <person name="Cao Z."/>
            <person name="Gu Z."/>
            <person name="Bruno D."/>
            <person name="Miranda M."/>
            <person name="Nguyen M."/>
            <person name="Wilhelmy J."/>
            <person name="Komp C."/>
            <person name="Tamse R."/>
            <person name="Wang X."/>
            <person name="Jia P."/>
            <person name="Luedi P."/>
            <person name="Oefner P.J."/>
            <person name="David L."/>
            <person name="Dietrich F.S."/>
            <person name="Li Y."/>
            <person name="Davis R.W."/>
            <person name="Steinmetz L.M."/>
        </authorList>
    </citation>
    <scope>NUCLEOTIDE SEQUENCE [LARGE SCALE GENOMIC DNA]</scope>
    <source>
        <strain>YJM789</strain>
    </source>
</reference>